<dbReference type="PIR" id="A58853">
    <property type="entry name" value="A58853"/>
</dbReference>
<dbReference type="PIR" id="E60727">
    <property type="entry name" value="E60727"/>
</dbReference>
<dbReference type="SMR" id="P35776"/>
<dbReference type="Allergome" id="3485">
    <property type="allergen name" value="Sol r 2.0101"/>
</dbReference>
<dbReference type="Allergome" id="635">
    <property type="allergen name" value="Sol r 2"/>
</dbReference>
<dbReference type="GO" id="GO:0005576">
    <property type="term" value="C:extracellular region"/>
    <property type="evidence" value="ECO:0007669"/>
    <property type="project" value="UniProtKB-SubCell"/>
</dbReference>
<dbReference type="CDD" id="cd12800">
    <property type="entry name" value="Sol_i_2"/>
    <property type="match status" value="1"/>
</dbReference>
<dbReference type="Gene3D" id="1.10.238.190">
    <property type="match status" value="1"/>
</dbReference>
<dbReference type="InterPro" id="IPR020181">
    <property type="entry name" value="Ant_venom_allergen_Sol_i_2"/>
</dbReference>
<dbReference type="InterPro" id="IPR038211">
    <property type="entry name" value="Ant_venon_allerg_soli_2/4_sf"/>
</dbReference>
<dbReference type="InterPro" id="IPR055216">
    <property type="entry name" value="Sol_i_2/4"/>
</dbReference>
<dbReference type="Pfam" id="PF22750">
    <property type="entry name" value="Sol_i_2"/>
    <property type="match status" value="1"/>
</dbReference>
<feature type="chain" id="PRO_0000065755" description="Venom allergen 2">
    <location>
        <begin position="1"/>
        <end position="119"/>
    </location>
</feature>
<reference key="1">
    <citation type="journal article" date="1997" name="J. Allergy Clin. Immunol.">
        <title>Reactions to less common species of fire ants.</title>
        <authorList>
            <person name="Hoffman D.R."/>
        </authorList>
    </citation>
    <scope>PROTEIN SEQUENCE</scope>
</reference>
<reference key="2">
    <citation type="journal article" date="1990" name="J. Allergy Clin. Immunol.">
        <title>Allergens in Hymenoptera venom. XXII. Comparison of venoms from two species of imported fire ants, Solenopsis invicta and richteri.</title>
        <authorList>
            <person name="Hoffman D.R."/>
            <person name="Smith A.M."/>
            <person name="Schmidt M."/>
            <person name="Moffitt J.E."/>
            <person name="Guralnick M."/>
        </authorList>
    </citation>
    <scope>PROTEIN SEQUENCE OF 1-20</scope>
    <source>
        <tissue>Venom</tissue>
    </source>
</reference>
<comment type="subunit">
    <text>Homodimer; disulfide-linked.</text>
</comment>
<comment type="subcellular location">
    <subcellularLocation>
        <location>Secreted</location>
    </subcellularLocation>
</comment>
<comment type="tissue specificity">
    <text>Expressed by the venom gland.</text>
</comment>
<comment type="allergen">
    <text>Causes an allergic reaction in human. The most common cause of insect venom allergy in the southeastern United States is the imported fire ant.</text>
</comment>
<comment type="similarity">
    <text evidence="1">Belongs to the ant venom allergen 2/4 family.</text>
</comment>
<protein>
    <recommendedName>
        <fullName>Venom allergen 2</fullName>
    </recommendedName>
    <alternativeName>
        <fullName>Allergen Sol r II</fullName>
    </alternativeName>
    <alternativeName>
        <fullName>Venom allergen II</fullName>
    </alternativeName>
    <allergenName>Sol r 2</allergenName>
</protein>
<evidence type="ECO:0000305" key="1"/>
<name>VA2_SOLRI</name>
<organism>
    <name type="scientific">Solenopsis richteri</name>
    <name type="common">Black imported fire ant</name>
    <dbReference type="NCBI Taxonomy" id="30203"/>
    <lineage>
        <taxon>Eukaryota</taxon>
        <taxon>Metazoa</taxon>
        <taxon>Ecdysozoa</taxon>
        <taxon>Arthropoda</taxon>
        <taxon>Hexapoda</taxon>
        <taxon>Insecta</taxon>
        <taxon>Pterygota</taxon>
        <taxon>Neoptera</taxon>
        <taxon>Endopterygota</taxon>
        <taxon>Hymenoptera</taxon>
        <taxon>Apocrita</taxon>
        <taxon>Aculeata</taxon>
        <taxon>Formicoidea</taxon>
        <taxon>Formicidae</taxon>
        <taxon>Myrmicinae</taxon>
        <taxon>Solenopsis</taxon>
    </lineage>
</organism>
<sequence>DIEAQRVLRKDIAECARTLPKCVNQPDDPLARVDVWHCAMSKRGVYDNPDPAVVKEKNSKMCPKIITDPADVENCKKVVSRCVDRETQRPRSNRQKAINITGCILRAGVVEATVLAREK</sequence>
<keyword id="KW-0020">Allergen</keyword>
<keyword id="KW-0903">Direct protein sequencing</keyword>
<keyword id="KW-1015">Disulfide bond</keyword>
<keyword id="KW-0964">Secreted</keyword>
<accession>P35776</accession>
<proteinExistence type="evidence at protein level"/>